<sequence length="382" mass="43875">MNIFDEIGDKESVFKDKKYLDHRFLPDRLPHREEQIRSIAKYWVEALNGVTPPDITIYGKTGTGKTAVAKFAMKQLKEASKDCDVNIRTEYIRCTDYTTEYQVIARLCQQLGRDVPYRGWTKAEIVNTFRNMFKKNAFGQDMILMVVLDEIDILLRNDGDGLLYTLTRTDNVSILSISNYVEFKKFIKPRVRSSLRDREIVFPPYGAQQLVDILEERSKMSFKEGALDDDVIPLCAALAAKEEGDARYALDLLRTAGEIADERDSDKVLGDFVREAKDYIEHNKITDIILTLPSQQQRVLEAILYLTKRKEEITSGRLYEVYKEIAKGDSVSYRRIFDFINELEMLGLISTNTVSRGRGKGRTNIIDLQCETSLLEDSLWGV</sequence>
<keyword id="KW-0067">ATP-binding</keyword>
<keyword id="KW-0235">DNA replication</keyword>
<keyword id="KW-0238">DNA-binding</keyword>
<keyword id="KW-0547">Nucleotide-binding</keyword>
<keyword id="KW-1185">Reference proteome</keyword>
<dbReference type="EMBL" id="AE000666">
    <property type="protein sequence ID" value="AAB85889.1"/>
    <property type="molecule type" value="Genomic_DNA"/>
</dbReference>
<dbReference type="PIR" id="B69055">
    <property type="entry name" value="B69055"/>
</dbReference>
<dbReference type="RefSeq" id="WP_010877024.1">
    <property type="nucleotide sequence ID" value="NC_000916.1"/>
</dbReference>
<dbReference type="SMR" id="O27463"/>
<dbReference type="STRING" id="187420.MTH_1412"/>
<dbReference type="PaxDb" id="187420-MTH_1412"/>
<dbReference type="EnsemblBacteria" id="AAB85889">
    <property type="protein sequence ID" value="AAB85889"/>
    <property type="gene ID" value="MTH_1412"/>
</dbReference>
<dbReference type="GeneID" id="82297848"/>
<dbReference type="KEGG" id="mth:MTH_1412"/>
<dbReference type="PATRIC" id="fig|187420.15.peg.1376"/>
<dbReference type="HOGENOM" id="CLU_025112_3_1_2"/>
<dbReference type="InParanoid" id="O27463"/>
<dbReference type="Proteomes" id="UP000005223">
    <property type="component" value="Chromosome"/>
</dbReference>
<dbReference type="GO" id="GO:0005524">
    <property type="term" value="F:ATP binding"/>
    <property type="evidence" value="ECO:0007669"/>
    <property type="project" value="UniProtKB-UniRule"/>
</dbReference>
<dbReference type="GO" id="GO:0016887">
    <property type="term" value="F:ATP hydrolysis activity"/>
    <property type="evidence" value="ECO:0007669"/>
    <property type="project" value="InterPro"/>
</dbReference>
<dbReference type="GO" id="GO:0003677">
    <property type="term" value="F:DNA binding"/>
    <property type="evidence" value="ECO:0007669"/>
    <property type="project" value="UniProtKB-KW"/>
</dbReference>
<dbReference type="GO" id="GO:0006260">
    <property type="term" value="P:DNA replication"/>
    <property type="evidence" value="ECO:0007669"/>
    <property type="project" value="UniProtKB-UniRule"/>
</dbReference>
<dbReference type="CDD" id="cd00009">
    <property type="entry name" value="AAA"/>
    <property type="match status" value="1"/>
</dbReference>
<dbReference type="CDD" id="cd08768">
    <property type="entry name" value="Cdc6_C"/>
    <property type="match status" value="1"/>
</dbReference>
<dbReference type="FunFam" id="1.10.8.60:FF:000073">
    <property type="entry name" value="ORC1-type DNA replication protein"/>
    <property type="match status" value="1"/>
</dbReference>
<dbReference type="Gene3D" id="1.10.8.60">
    <property type="match status" value="1"/>
</dbReference>
<dbReference type="Gene3D" id="3.40.50.300">
    <property type="entry name" value="P-loop containing nucleotide triphosphate hydrolases"/>
    <property type="match status" value="1"/>
</dbReference>
<dbReference type="Gene3D" id="1.10.10.10">
    <property type="entry name" value="Winged helix-like DNA-binding domain superfamily/Winged helix DNA-binding domain"/>
    <property type="match status" value="1"/>
</dbReference>
<dbReference type="HAMAP" id="MF_01407">
    <property type="entry name" value="ORC1_type_DNA_replic_protein"/>
    <property type="match status" value="1"/>
</dbReference>
<dbReference type="InterPro" id="IPR003593">
    <property type="entry name" value="AAA+_ATPase"/>
</dbReference>
<dbReference type="InterPro" id="IPR049945">
    <property type="entry name" value="AAA_22"/>
</dbReference>
<dbReference type="InterPro" id="IPR015163">
    <property type="entry name" value="Cdc6_C"/>
</dbReference>
<dbReference type="InterPro" id="IPR055237">
    <property type="entry name" value="Cdc6_lid"/>
</dbReference>
<dbReference type="InterPro" id="IPR050311">
    <property type="entry name" value="ORC1/CDC6"/>
</dbReference>
<dbReference type="InterPro" id="IPR014277">
    <property type="entry name" value="Orc1/Cdc6_arc"/>
</dbReference>
<dbReference type="InterPro" id="IPR027417">
    <property type="entry name" value="P-loop_NTPase"/>
</dbReference>
<dbReference type="InterPro" id="IPR036388">
    <property type="entry name" value="WH-like_DNA-bd_sf"/>
</dbReference>
<dbReference type="InterPro" id="IPR036390">
    <property type="entry name" value="WH_DNA-bd_sf"/>
</dbReference>
<dbReference type="NCBIfam" id="TIGR02928">
    <property type="entry name" value="orc1/cdc6 family replication initiation protein"/>
    <property type="match status" value="1"/>
</dbReference>
<dbReference type="PANTHER" id="PTHR10763:SF26">
    <property type="entry name" value="CELL DIVISION CONTROL PROTEIN 6 HOMOLOG"/>
    <property type="match status" value="1"/>
</dbReference>
<dbReference type="PANTHER" id="PTHR10763">
    <property type="entry name" value="CELL DIVISION CONTROL PROTEIN 6-RELATED"/>
    <property type="match status" value="1"/>
</dbReference>
<dbReference type="Pfam" id="PF13401">
    <property type="entry name" value="AAA_22"/>
    <property type="match status" value="1"/>
</dbReference>
<dbReference type="Pfam" id="PF09079">
    <property type="entry name" value="Cdc6_C"/>
    <property type="match status" value="1"/>
</dbReference>
<dbReference type="Pfam" id="PF22703">
    <property type="entry name" value="Cdc6_lid"/>
    <property type="match status" value="1"/>
</dbReference>
<dbReference type="SMART" id="SM00382">
    <property type="entry name" value="AAA"/>
    <property type="match status" value="1"/>
</dbReference>
<dbReference type="SMART" id="SM01074">
    <property type="entry name" value="Cdc6_C"/>
    <property type="match status" value="1"/>
</dbReference>
<dbReference type="SUPFAM" id="SSF52540">
    <property type="entry name" value="P-loop containing nucleoside triphosphate hydrolases"/>
    <property type="match status" value="1"/>
</dbReference>
<dbReference type="SUPFAM" id="SSF46785">
    <property type="entry name" value="Winged helix' DNA-binding domain"/>
    <property type="match status" value="1"/>
</dbReference>
<feature type="chain" id="PRO_0000151008" description="ORC1-type DNA replication protein 1">
    <location>
        <begin position="1"/>
        <end position="382"/>
    </location>
</feature>
<feature type="binding site" evidence="1">
    <location>
        <begin position="63"/>
        <end position="67"/>
    </location>
    <ligand>
        <name>ATP</name>
        <dbReference type="ChEBI" id="CHEBI:30616"/>
    </ligand>
</feature>
<feature type="binding site" evidence="1">
    <location>
        <position position="205"/>
    </location>
    <ligand>
        <name>ATP</name>
        <dbReference type="ChEBI" id="CHEBI:30616"/>
    </ligand>
</feature>
<feature type="binding site" evidence="1">
    <location>
        <position position="217"/>
    </location>
    <ligand>
        <name>ATP</name>
        <dbReference type="ChEBI" id="CHEBI:30616"/>
    </ligand>
</feature>
<feature type="mutagenesis site" description="No labeling with ATP." evidence="2">
    <original>D</original>
    <variation>N</variation>
    <location>
        <position position="149"/>
    </location>
</feature>
<feature type="mutagenesis site" description="Abolishes DNA binding." evidence="3">
    <original>R</original>
    <variation>A</variation>
    <location>
        <position position="334"/>
    </location>
</feature>
<evidence type="ECO:0000255" key="1">
    <source>
        <dbReference type="HAMAP-Rule" id="MF_01407"/>
    </source>
</evidence>
<evidence type="ECO:0000269" key="2">
    <source>
    </source>
</evidence>
<evidence type="ECO:0000269" key="3">
    <source>
    </source>
</evidence>
<evidence type="ECO:0000269" key="4">
    <source>
    </source>
</evidence>
<evidence type="ECO:0000269" key="5">
    <source>
    </source>
</evidence>
<evidence type="ECO:0000269" key="6">
    <source>
    </source>
</evidence>
<name>CDC61_METTH</name>
<gene>
    <name type="primary">cdc6-1</name>
    <name type="ordered locus">MTH_1412</name>
</gene>
<proteinExistence type="evidence at protein level"/>
<accession>O27463</accession>
<reference key="1">
    <citation type="journal article" date="1997" name="J. Bacteriol.">
        <title>Complete genome sequence of Methanobacterium thermoautotrophicum deltaH: functional analysis and comparative genomics.</title>
        <authorList>
            <person name="Smith D.R."/>
            <person name="Doucette-Stamm L.A."/>
            <person name="Deloughery C."/>
            <person name="Lee H.-M."/>
            <person name="Dubois J."/>
            <person name="Aldredge T."/>
            <person name="Bashirzadeh R."/>
            <person name="Blakely D."/>
            <person name="Cook R."/>
            <person name="Gilbert K."/>
            <person name="Harrison D."/>
            <person name="Hoang L."/>
            <person name="Keagle P."/>
            <person name="Lumm W."/>
            <person name="Pothier B."/>
            <person name="Qiu D."/>
            <person name="Spadafora R."/>
            <person name="Vicare R."/>
            <person name="Wang Y."/>
            <person name="Wierzbowski J."/>
            <person name="Gibson R."/>
            <person name="Jiwani N."/>
            <person name="Caruso A."/>
            <person name="Bush D."/>
            <person name="Safer H."/>
            <person name="Patwell D."/>
            <person name="Prabhakar S."/>
            <person name="McDougall S."/>
            <person name="Shimer G."/>
            <person name="Goyal A."/>
            <person name="Pietrovski S."/>
            <person name="Church G.M."/>
            <person name="Daniels C.J."/>
            <person name="Mao J.-I."/>
            <person name="Rice P."/>
            <person name="Noelling J."/>
            <person name="Reeve J.N."/>
        </authorList>
    </citation>
    <scope>NUCLEOTIDE SEQUENCE [LARGE SCALE GENOMIC DNA]</scope>
    <source>
        <strain>ATCC 29096 / DSM 1053 / JCM 10044 / NBRC 100330 / Delta H</strain>
    </source>
</reference>
<reference key="2">
    <citation type="journal article" date="2001" name="J. Bacteriol.">
        <title>Autophosphorylation of archaeal Cdc6 homologues is regulated by DNA.</title>
        <authorList>
            <person name="Grabowski B."/>
            <person name="Kelman Z."/>
        </authorList>
    </citation>
    <scope>PHOSPHORYLATION</scope>
    <scope>MUTAGENESIS OF ASP-149</scope>
</reference>
<reference key="3">
    <citation type="journal article" date="2004" name="Nucleic Acids Res.">
        <title>Biochemical characterization of Cdc6/Orc1 binding to the replication origin of the euryarchaeon Methanothermobacter thermoautotrophicus.</title>
        <authorList>
            <person name="Capaldi S.A."/>
            <person name="Berger J.M."/>
        </authorList>
    </citation>
    <scope>FUNCTION</scope>
    <scope>DNA-BINDING</scope>
    <scope>SUBUNIT</scope>
    <scope>MUTAGENESIS OF ARG-334</scope>
</reference>
<reference key="4">
    <citation type="journal article" date="2005" name="Nucleic Acids Res.">
        <title>Interactions between the archaeal Cdc6 and MCM proteins modulate their biochemical properties.</title>
        <authorList>
            <person name="Kasiviswanathan R."/>
            <person name="Shin J.H."/>
            <person name="Kelman Z."/>
        </authorList>
    </citation>
    <scope>FUNCTION</scope>
    <scope>DNA-BINDING</scope>
    <scope>INTERACTION WITH MCM</scope>
    <scope>PHOSPHORYLATION</scope>
</reference>
<reference key="5">
    <citation type="journal article" date="2006" name="J. Bacteriol.">
        <title>DNA binding by the Methanothermobacter thermautotrophicus Cdc6 protein is inhibited by the minichromosome maintenance helicase.</title>
        <authorList>
            <person name="Kasiviswanathan R."/>
            <person name="Shin J.H."/>
            <person name="Kelman Z."/>
        </authorList>
    </citation>
    <scope>FUNCTION</scope>
    <scope>DNA-BINDING</scope>
    <scope>INTERACTION WITH MCM</scope>
    <scope>DOMAIN</scope>
</reference>
<reference key="6">
    <citation type="journal article" date="2008" name="J. Bacteriol.">
        <title>The Methanothermobacter thermautotrophicus Cdc6-2 protein, the putative helicase loader, dissociates the minichromosome maintenance helicase.</title>
        <authorList>
            <person name="Shin J.H."/>
            <person name="Heo G.Y."/>
            <person name="Kelman Z."/>
        </authorList>
    </citation>
    <scope>FUNCTION</scope>
</reference>
<protein>
    <recommendedName>
        <fullName evidence="1">ORC1-type DNA replication protein 1</fullName>
    </recommendedName>
</protein>
<comment type="function">
    <text evidence="1 3 4 5 6">Involved in regulation of DNA replication. May play an essential role in origin recognition. Binds to DNA, with a preference for origin-specific double-stranded sequences. Does not bind single-stranded DNA. Inhibits MCM helicase activity but does not affect its oligomeric state.</text>
</comment>
<comment type="subunit">
    <text evidence="3 4 5">Monomer. Interacts with MCM via the WH domain.</text>
</comment>
<comment type="domain">
    <text evidence="5">The N-terminal AAA+ ATPase domain and the C-terminal winged-helix (WH) domain are both required for DNA binding.</text>
</comment>
<comment type="PTM">
    <text evidence="2 4">Autophosphorylated on a serine. Phosphorylation is stimulated by binding to MCM. Both single-stranded DNA and double-stranded DNA inhibit the phosphorylation reaction.</text>
</comment>
<comment type="similarity">
    <text evidence="1">Belongs to the CDC6/cdc18 family.</text>
</comment>
<organism>
    <name type="scientific">Methanothermobacter thermautotrophicus (strain ATCC 29096 / DSM 1053 / JCM 10044 / NBRC 100330 / Delta H)</name>
    <name type="common">Methanobacterium thermoautotrophicum</name>
    <dbReference type="NCBI Taxonomy" id="187420"/>
    <lineage>
        <taxon>Archaea</taxon>
        <taxon>Methanobacteriati</taxon>
        <taxon>Methanobacteriota</taxon>
        <taxon>Methanomada group</taxon>
        <taxon>Methanobacteria</taxon>
        <taxon>Methanobacteriales</taxon>
        <taxon>Methanobacteriaceae</taxon>
        <taxon>Methanothermobacter</taxon>
    </lineage>
</organism>